<evidence type="ECO:0000255" key="1">
    <source>
        <dbReference type="HAMAP-Rule" id="MF_00822"/>
    </source>
</evidence>
<evidence type="ECO:0000256" key="2">
    <source>
        <dbReference type="SAM" id="MobiDB-lite"/>
    </source>
</evidence>
<feature type="chain" id="PRO_0000223428" description="Urease accessory protein UreE 2">
    <location>
        <begin position="1"/>
        <end position="166"/>
    </location>
</feature>
<feature type="region of interest" description="Disordered" evidence="2">
    <location>
        <begin position="133"/>
        <end position="156"/>
    </location>
</feature>
<protein>
    <recommendedName>
        <fullName evidence="1">Urease accessory protein UreE 2</fullName>
    </recommendedName>
</protein>
<dbReference type="EMBL" id="AE016853">
    <property type="protein sequence ID" value="AAO58337.1"/>
    <property type="molecule type" value="Genomic_DNA"/>
</dbReference>
<dbReference type="RefSeq" id="NP_794642.1">
    <property type="nucleotide sequence ID" value="NC_004578.1"/>
</dbReference>
<dbReference type="SMR" id="Q87VM7"/>
<dbReference type="STRING" id="223283.PSPTO_4909"/>
<dbReference type="GeneID" id="1186592"/>
<dbReference type="KEGG" id="pst:PSPTO_4909"/>
<dbReference type="PATRIC" id="fig|223283.9.peg.5022"/>
<dbReference type="eggNOG" id="COG2371">
    <property type="taxonomic scope" value="Bacteria"/>
</dbReference>
<dbReference type="HOGENOM" id="CLU_093757_2_0_6"/>
<dbReference type="OrthoDB" id="5421304at2"/>
<dbReference type="PhylomeDB" id="Q87VM7"/>
<dbReference type="Proteomes" id="UP000002515">
    <property type="component" value="Chromosome"/>
</dbReference>
<dbReference type="GO" id="GO:0005737">
    <property type="term" value="C:cytoplasm"/>
    <property type="evidence" value="ECO:0007669"/>
    <property type="project" value="UniProtKB-SubCell"/>
</dbReference>
<dbReference type="GO" id="GO:0016151">
    <property type="term" value="F:nickel cation binding"/>
    <property type="evidence" value="ECO:0007669"/>
    <property type="project" value="UniProtKB-UniRule"/>
</dbReference>
<dbReference type="GO" id="GO:0051082">
    <property type="term" value="F:unfolded protein binding"/>
    <property type="evidence" value="ECO:0007669"/>
    <property type="project" value="UniProtKB-UniRule"/>
</dbReference>
<dbReference type="GO" id="GO:0006457">
    <property type="term" value="P:protein folding"/>
    <property type="evidence" value="ECO:0007669"/>
    <property type="project" value="InterPro"/>
</dbReference>
<dbReference type="GO" id="GO:0065003">
    <property type="term" value="P:protein-containing complex assembly"/>
    <property type="evidence" value="ECO:0007669"/>
    <property type="project" value="InterPro"/>
</dbReference>
<dbReference type="GO" id="GO:0019627">
    <property type="term" value="P:urea metabolic process"/>
    <property type="evidence" value="ECO:0007669"/>
    <property type="project" value="InterPro"/>
</dbReference>
<dbReference type="CDD" id="cd00571">
    <property type="entry name" value="UreE"/>
    <property type="match status" value="1"/>
</dbReference>
<dbReference type="Gene3D" id="2.60.260.20">
    <property type="entry name" value="Urease metallochaperone UreE, N-terminal domain"/>
    <property type="match status" value="1"/>
</dbReference>
<dbReference type="Gene3D" id="3.30.70.790">
    <property type="entry name" value="UreE, C-terminal domain"/>
    <property type="match status" value="1"/>
</dbReference>
<dbReference type="HAMAP" id="MF_00822">
    <property type="entry name" value="UreE"/>
    <property type="match status" value="1"/>
</dbReference>
<dbReference type="InterPro" id="IPR012406">
    <property type="entry name" value="UreE"/>
</dbReference>
<dbReference type="InterPro" id="IPR007864">
    <property type="entry name" value="UreE_C_dom"/>
</dbReference>
<dbReference type="InterPro" id="IPR004029">
    <property type="entry name" value="UreE_N"/>
</dbReference>
<dbReference type="InterPro" id="IPR036118">
    <property type="entry name" value="UreE_N_sf"/>
</dbReference>
<dbReference type="NCBIfam" id="NF009751">
    <property type="entry name" value="PRK13261.1-1"/>
    <property type="match status" value="1"/>
</dbReference>
<dbReference type="NCBIfam" id="NF009753">
    <property type="entry name" value="PRK13261.1-5"/>
    <property type="match status" value="1"/>
</dbReference>
<dbReference type="Pfam" id="PF05194">
    <property type="entry name" value="UreE_C"/>
    <property type="match status" value="1"/>
</dbReference>
<dbReference type="Pfam" id="PF02814">
    <property type="entry name" value="UreE_N"/>
    <property type="match status" value="1"/>
</dbReference>
<dbReference type="PIRSF" id="PIRSF036402">
    <property type="entry name" value="Ureas_acces_UreE"/>
    <property type="match status" value="1"/>
</dbReference>
<dbReference type="SMART" id="SM00988">
    <property type="entry name" value="UreE_N"/>
    <property type="match status" value="1"/>
</dbReference>
<dbReference type="SUPFAM" id="SSF69737">
    <property type="entry name" value="Urease metallochaperone UreE, C-terminal domain"/>
    <property type="match status" value="1"/>
</dbReference>
<dbReference type="SUPFAM" id="SSF69287">
    <property type="entry name" value="Urease metallochaperone UreE, N-terminal domain"/>
    <property type="match status" value="1"/>
</dbReference>
<comment type="function">
    <text evidence="1">Involved in urease metallocenter assembly. Binds nickel. Probably functions as a nickel donor during metallocenter assembly.</text>
</comment>
<comment type="subcellular location">
    <subcellularLocation>
        <location evidence="1">Cytoplasm</location>
    </subcellularLocation>
</comment>
<comment type="similarity">
    <text evidence="1">Belongs to the UreE family.</text>
</comment>
<organism>
    <name type="scientific">Pseudomonas syringae pv. tomato (strain ATCC BAA-871 / DC3000)</name>
    <dbReference type="NCBI Taxonomy" id="223283"/>
    <lineage>
        <taxon>Bacteria</taxon>
        <taxon>Pseudomonadati</taxon>
        <taxon>Pseudomonadota</taxon>
        <taxon>Gammaproteobacteria</taxon>
        <taxon>Pseudomonadales</taxon>
        <taxon>Pseudomonadaceae</taxon>
        <taxon>Pseudomonas</taxon>
    </lineage>
</organism>
<reference key="1">
    <citation type="journal article" date="2003" name="Proc. Natl. Acad. Sci. U.S.A.">
        <title>The complete genome sequence of the Arabidopsis and tomato pathogen Pseudomonas syringae pv. tomato DC3000.</title>
        <authorList>
            <person name="Buell C.R."/>
            <person name="Joardar V."/>
            <person name="Lindeberg M."/>
            <person name="Selengut J."/>
            <person name="Paulsen I.T."/>
            <person name="Gwinn M.L."/>
            <person name="Dodson R.J."/>
            <person name="DeBoy R.T."/>
            <person name="Durkin A.S."/>
            <person name="Kolonay J.F."/>
            <person name="Madupu R."/>
            <person name="Daugherty S.C."/>
            <person name="Brinkac L.M."/>
            <person name="Beanan M.J."/>
            <person name="Haft D.H."/>
            <person name="Nelson W.C."/>
            <person name="Davidsen T.M."/>
            <person name="Zafar N."/>
            <person name="Zhou L."/>
            <person name="Liu J."/>
            <person name="Yuan Q."/>
            <person name="Khouri H.M."/>
            <person name="Fedorova N.B."/>
            <person name="Tran B."/>
            <person name="Russell D."/>
            <person name="Berry K.J."/>
            <person name="Utterback T.R."/>
            <person name="Van Aken S.E."/>
            <person name="Feldblyum T.V."/>
            <person name="D'Ascenzo M."/>
            <person name="Deng W.-L."/>
            <person name="Ramos A.R."/>
            <person name="Alfano J.R."/>
            <person name="Cartinhour S."/>
            <person name="Chatterjee A.K."/>
            <person name="Delaney T.P."/>
            <person name="Lazarowitz S.G."/>
            <person name="Martin G.B."/>
            <person name="Schneider D.J."/>
            <person name="Tang X."/>
            <person name="Bender C.L."/>
            <person name="White O."/>
            <person name="Fraser C.M."/>
            <person name="Collmer A."/>
        </authorList>
    </citation>
    <scope>NUCLEOTIDE SEQUENCE [LARGE SCALE GENOMIC DNA]</scope>
    <source>
        <strain>ATCC BAA-871 / DC3000</strain>
    </source>
</reference>
<proteinExistence type="inferred from homology"/>
<name>UREE2_PSESM</name>
<sequence>MLVIHNRIEPQAEWAAELHLNFEARSKSRLRCFSAENEDVGLFLQRGQSPLRDGEFLQAEDGRIVRVCARPEKLMHVTCSSTFELTRAAYHLGNRHVALQVGDGWLRLLDDYVLKAMLDQLGATTEAIEAPFQPEHGAYGGGHHHSRAGEEDFNYPPRMHQFGVRK</sequence>
<keyword id="KW-0143">Chaperone</keyword>
<keyword id="KW-0963">Cytoplasm</keyword>
<keyword id="KW-0533">Nickel</keyword>
<keyword id="KW-0996">Nickel insertion</keyword>
<keyword id="KW-1185">Reference proteome</keyword>
<accession>Q87VM7</accession>
<gene>
    <name evidence="1" type="primary">ureE2</name>
    <name type="ordered locus">PSPTO_4909</name>
</gene>